<gene>
    <name type="primary">crtQ</name>
    <name type="ordered locus">SAV2563</name>
</gene>
<evidence type="ECO:0000250" key="1"/>
<evidence type="ECO:0000255" key="2"/>
<evidence type="ECO:0000305" key="3"/>
<organism>
    <name type="scientific">Staphylococcus aureus (strain Mu50 / ATCC 700699)</name>
    <dbReference type="NCBI Taxonomy" id="158878"/>
    <lineage>
        <taxon>Bacteria</taxon>
        <taxon>Bacillati</taxon>
        <taxon>Bacillota</taxon>
        <taxon>Bacilli</taxon>
        <taxon>Bacillales</taxon>
        <taxon>Staphylococcaceae</taxon>
        <taxon>Staphylococcus</taxon>
    </lineage>
</organism>
<sequence>MKWLSRILTVIVTMSMACGALIFNRRHQLKTKTLNFNHKALTIIIPARNEEKRIGHLLHSIIQQQVPVDVIVMNDGSTDETARVARSYGATVVDVVDDTDGKWYGKSHACYQGVTHACTNRIAFVDADVTFLRKDAVETLINQYQLQGEKGLLSVQPYHITKRFYEGFSAIFNLMTVVGMNVFSTLDDGRTNQHAFGPVTLTNKEDYYATGGHKSANRHIIEGFALGSAYTSQSLPVTVYEGFPFVAFRMYQEGFQSLQEGWTKHLSTGAGGTKPKIMTAIVLWLFGSIASILGLCLSLKYRQMSVRKMVALYLSYTTQFIYLHRRVGQFSNLLMVCHPLLFMFFTKIFIQSWKQTHRYGVVEWKGRQYSISKEQ</sequence>
<dbReference type="EC" id="2.4.1.-"/>
<dbReference type="EMBL" id="BA000017">
    <property type="protein sequence ID" value="BAB58725.1"/>
    <property type="molecule type" value="Genomic_DNA"/>
</dbReference>
<dbReference type="RefSeq" id="WP_000871744.1">
    <property type="nucleotide sequence ID" value="NC_002758.2"/>
</dbReference>
<dbReference type="SMR" id="Q99R74"/>
<dbReference type="CAZy" id="GT2">
    <property type="family name" value="Glycosyltransferase Family 2"/>
</dbReference>
<dbReference type="KEGG" id="sav:SAV2563"/>
<dbReference type="HOGENOM" id="CLU_038143_1_0_9"/>
<dbReference type="PhylomeDB" id="Q99R74"/>
<dbReference type="UniPathway" id="UPA00029">
    <property type="reaction ID" value="UER00559"/>
</dbReference>
<dbReference type="Proteomes" id="UP000002481">
    <property type="component" value="Chromosome"/>
</dbReference>
<dbReference type="GO" id="GO:0005886">
    <property type="term" value="C:plasma membrane"/>
    <property type="evidence" value="ECO:0007669"/>
    <property type="project" value="UniProtKB-SubCell"/>
</dbReference>
<dbReference type="GO" id="GO:0016757">
    <property type="term" value="F:glycosyltransferase activity"/>
    <property type="evidence" value="ECO:0007669"/>
    <property type="project" value="UniProtKB-KW"/>
</dbReference>
<dbReference type="GO" id="GO:0016117">
    <property type="term" value="P:carotenoid biosynthetic process"/>
    <property type="evidence" value="ECO:0007669"/>
    <property type="project" value="UniProtKB-KW"/>
</dbReference>
<dbReference type="CDD" id="cd00761">
    <property type="entry name" value="Glyco_tranf_GTA_type"/>
    <property type="match status" value="1"/>
</dbReference>
<dbReference type="Gene3D" id="3.90.550.10">
    <property type="entry name" value="Spore Coat Polysaccharide Biosynthesis Protein SpsA, Chain A"/>
    <property type="match status" value="1"/>
</dbReference>
<dbReference type="InterPro" id="IPR001173">
    <property type="entry name" value="Glyco_trans_2-like"/>
</dbReference>
<dbReference type="InterPro" id="IPR029044">
    <property type="entry name" value="Nucleotide-diphossugar_trans"/>
</dbReference>
<dbReference type="PANTHER" id="PTHR43646">
    <property type="entry name" value="GLYCOSYLTRANSFERASE"/>
    <property type="match status" value="1"/>
</dbReference>
<dbReference type="PANTHER" id="PTHR43646:SF2">
    <property type="entry name" value="GLYCOSYLTRANSFERASE 2-LIKE DOMAIN-CONTAINING PROTEIN"/>
    <property type="match status" value="1"/>
</dbReference>
<dbReference type="Pfam" id="PF00535">
    <property type="entry name" value="Glycos_transf_2"/>
    <property type="match status" value="1"/>
</dbReference>
<dbReference type="SUPFAM" id="SSF53448">
    <property type="entry name" value="Nucleotide-diphospho-sugar transferases"/>
    <property type="match status" value="1"/>
</dbReference>
<accession>Q99R74</accession>
<name>CRTQ_STAAM</name>
<feature type="chain" id="PRO_0000284862" description="4,4'-diaponeurosporenoate glycosyltransferase">
    <location>
        <begin position="1"/>
        <end position="375"/>
    </location>
</feature>
<feature type="transmembrane region" description="Helical" evidence="2">
    <location>
        <begin position="3"/>
        <end position="23"/>
    </location>
</feature>
<feature type="transmembrane region" description="Helical" evidence="2">
    <location>
        <begin position="164"/>
        <end position="184"/>
    </location>
</feature>
<feature type="transmembrane region" description="Helical" evidence="2">
    <location>
        <begin position="277"/>
        <end position="297"/>
    </location>
</feature>
<feature type="transmembrane region" description="Helical" evidence="2">
    <location>
        <begin position="330"/>
        <end position="350"/>
    </location>
</feature>
<comment type="function">
    <text evidence="1">Catalyzes the glycosylation of 4,4'-diaponeurosporenoate, i.e. the esterification of glucose at the C1'' position with the carboxyl group of 4,4'-diaponeurosporenic acid, to form glycosyl-4,4'-diaponeurosporenoate. This is a step in the biosynthesis of staphyloxanthin, an orange pigment present in most staphylococci strains (By similarity).</text>
</comment>
<comment type="pathway">
    <text>Carotenoid biosynthesis; staphyloxanthin biosynthesis; staphyloxanthin from farnesyl diphosphate: step 4/5.</text>
</comment>
<comment type="subcellular location">
    <subcellularLocation>
        <location evidence="3">Cell membrane</location>
        <topology evidence="3">Multi-pass membrane protein</topology>
    </subcellularLocation>
</comment>
<comment type="similarity">
    <text evidence="3">Belongs to the glycosyltransferase 2 family. CrtQ subfamily.</text>
</comment>
<keyword id="KW-0125">Carotenoid biosynthesis</keyword>
<keyword id="KW-1003">Cell membrane</keyword>
<keyword id="KW-0328">Glycosyltransferase</keyword>
<keyword id="KW-0472">Membrane</keyword>
<keyword id="KW-0808">Transferase</keyword>
<keyword id="KW-0812">Transmembrane</keyword>
<keyword id="KW-1133">Transmembrane helix</keyword>
<reference key="1">
    <citation type="journal article" date="2001" name="Lancet">
        <title>Whole genome sequencing of meticillin-resistant Staphylococcus aureus.</title>
        <authorList>
            <person name="Kuroda M."/>
            <person name="Ohta T."/>
            <person name="Uchiyama I."/>
            <person name="Baba T."/>
            <person name="Yuzawa H."/>
            <person name="Kobayashi I."/>
            <person name="Cui L."/>
            <person name="Oguchi A."/>
            <person name="Aoki K."/>
            <person name="Nagai Y."/>
            <person name="Lian J.-Q."/>
            <person name="Ito T."/>
            <person name="Kanamori M."/>
            <person name="Matsumaru H."/>
            <person name="Maruyama A."/>
            <person name="Murakami H."/>
            <person name="Hosoyama A."/>
            <person name="Mizutani-Ui Y."/>
            <person name="Takahashi N.K."/>
            <person name="Sawano T."/>
            <person name="Inoue R."/>
            <person name="Kaito C."/>
            <person name="Sekimizu K."/>
            <person name="Hirakawa H."/>
            <person name="Kuhara S."/>
            <person name="Goto S."/>
            <person name="Yabuzaki J."/>
            <person name="Kanehisa M."/>
            <person name="Yamashita A."/>
            <person name="Oshima K."/>
            <person name="Furuya K."/>
            <person name="Yoshino C."/>
            <person name="Shiba T."/>
            <person name="Hattori M."/>
            <person name="Ogasawara N."/>
            <person name="Hayashi H."/>
            <person name="Hiramatsu K."/>
        </authorList>
    </citation>
    <scope>NUCLEOTIDE SEQUENCE [LARGE SCALE GENOMIC DNA]</scope>
    <source>
        <strain>Mu50 / ATCC 700699</strain>
    </source>
</reference>
<proteinExistence type="inferred from homology"/>
<protein>
    <recommendedName>
        <fullName>4,4'-diaponeurosporenoate glycosyltransferase</fullName>
        <ecNumber>2.4.1.-</ecNumber>
    </recommendedName>
</protein>